<organism>
    <name type="scientific">Neisseria gonorrhoeae (strain NCCP11945)</name>
    <dbReference type="NCBI Taxonomy" id="521006"/>
    <lineage>
        <taxon>Bacteria</taxon>
        <taxon>Pseudomonadati</taxon>
        <taxon>Pseudomonadota</taxon>
        <taxon>Betaproteobacteria</taxon>
        <taxon>Neisseriales</taxon>
        <taxon>Neisseriaceae</taxon>
        <taxon>Neisseria</taxon>
    </lineage>
</organism>
<comment type="function">
    <text evidence="1">Oxidative deamination of D-amino acids.</text>
</comment>
<comment type="catalytic activity">
    <reaction evidence="1">
        <text>a D-alpha-amino acid + A + H2O = a 2-oxocarboxylate + AH2 + NH4(+)</text>
        <dbReference type="Rhea" id="RHEA:18125"/>
        <dbReference type="ChEBI" id="CHEBI:13193"/>
        <dbReference type="ChEBI" id="CHEBI:15377"/>
        <dbReference type="ChEBI" id="CHEBI:17499"/>
        <dbReference type="ChEBI" id="CHEBI:28938"/>
        <dbReference type="ChEBI" id="CHEBI:35179"/>
        <dbReference type="ChEBI" id="CHEBI:59871"/>
    </reaction>
</comment>
<comment type="cofactor">
    <cofactor evidence="1">
        <name>FAD</name>
        <dbReference type="ChEBI" id="CHEBI:57692"/>
    </cofactor>
</comment>
<comment type="pathway">
    <text>Amino-acid degradation; D-alanine degradation; NH(3) and pyruvate from D-alanine: step 1/1.</text>
</comment>
<comment type="similarity">
    <text evidence="1">Belongs to the DadA oxidoreductase family.</text>
</comment>
<name>DADA_NEIG2</name>
<sequence length="419" mass="46845">MKVLVLGAGVAGVSSVWYLAEAGHEVTVIDRTEGVAMETSFANAGQLSYGYTTPWAAPGIPTKALKRLFKSHPPLLFRPDGGLYQIEWLWRMLQNCTATRYQINKERMVRISEYSREMFRRFEAQTDMNFEGRKKGTLQIFRQTEEVEAAKQDIAVLERYGVPYRRLKPEECAEFEPALARVTAKIVGGLHLPADATGDCRLFTENLYKLCQEKGVRFYFNQTISRIDHNGLRIKAVETETGRFETDAVVCALGCFSRTVLAQLDLNLPIYPVKGYSLTLPVTNSDGAPVSTVLDESYKVAITRFDNRIRVGGMAELSGYETKLPEKRRETLALVVNDLFPEGGDLSQALSWSGLRPMTPDSTPLIGRTRFENLFLNTGHGTLGWTMSPGSAKLTADIVSGKDTEIRSDDLSLSRYQKL</sequence>
<reference key="1">
    <citation type="journal article" date="2008" name="J. Bacteriol.">
        <title>Complete genome sequence of Neisseria gonorrhoeae NCCP11945.</title>
        <authorList>
            <person name="Chung G.T."/>
            <person name="Yoo J.S."/>
            <person name="Oh H.B."/>
            <person name="Lee Y.S."/>
            <person name="Cha S.H."/>
            <person name="Kim S.J."/>
            <person name="Yoo C.K."/>
        </authorList>
    </citation>
    <scope>NUCLEOTIDE SEQUENCE [LARGE SCALE GENOMIC DNA]</scope>
    <source>
        <strain>NCCP11945</strain>
    </source>
</reference>
<dbReference type="EC" id="1.4.99.-" evidence="1"/>
<dbReference type="EMBL" id="CP001050">
    <property type="protein sequence ID" value="ACF31065.1"/>
    <property type="molecule type" value="Genomic_DNA"/>
</dbReference>
<dbReference type="RefSeq" id="WP_003690316.1">
    <property type="nucleotide sequence ID" value="NC_011035.1"/>
</dbReference>
<dbReference type="SMR" id="B4RR07"/>
<dbReference type="KEGG" id="ngk:NGK_2465"/>
<dbReference type="HOGENOM" id="CLU_007884_9_2_4"/>
<dbReference type="UniPathway" id="UPA00043">
    <property type="reaction ID" value="UER00498"/>
</dbReference>
<dbReference type="Proteomes" id="UP000002564">
    <property type="component" value="Chromosome"/>
</dbReference>
<dbReference type="GO" id="GO:0005737">
    <property type="term" value="C:cytoplasm"/>
    <property type="evidence" value="ECO:0007669"/>
    <property type="project" value="TreeGrafter"/>
</dbReference>
<dbReference type="GO" id="GO:0005886">
    <property type="term" value="C:plasma membrane"/>
    <property type="evidence" value="ECO:0007669"/>
    <property type="project" value="TreeGrafter"/>
</dbReference>
<dbReference type="GO" id="GO:0008718">
    <property type="term" value="F:D-amino-acid dehydrogenase activity"/>
    <property type="evidence" value="ECO:0007669"/>
    <property type="project" value="UniProtKB-UniRule"/>
</dbReference>
<dbReference type="GO" id="GO:0055130">
    <property type="term" value="P:D-alanine catabolic process"/>
    <property type="evidence" value="ECO:0007669"/>
    <property type="project" value="UniProtKB-UniPathway"/>
</dbReference>
<dbReference type="FunFam" id="3.50.50.60:FF:000020">
    <property type="entry name" value="D-amino acid dehydrogenase"/>
    <property type="match status" value="1"/>
</dbReference>
<dbReference type="Gene3D" id="3.30.9.10">
    <property type="entry name" value="D-Amino Acid Oxidase, subunit A, domain 2"/>
    <property type="match status" value="1"/>
</dbReference>
<dbReference type="Gene3D" id="3.50.50.60">
    <property type="entry name" value="FAD/NAD(P)-binding domain"/>
    <property type="match status" value="2"/>
</dbReference>
<dbReference type="HAMAP" id="MF_01202">
    <property type="entry name" value="DadA"/>
    <property type="match status" value="1"/>
</dbReference>
<dbReference type="InterPro" id="IPR023080">
    <property type="entry name" value="DadA"/>
</dbReference>
<dbReference type="InterPro" id="IPR006076">
    <property type="entry name" value="FAD-dep_OxRdtase"/>
</dbReference>
<dbReference type="InterPro" id="IPR036188">
    <property type="entry name" value="FAD/NAD-bd_sf"/>
</dbReference>
<dbReference type="NCBIfam" id="NF001933">
    <property type="entry name" value="PRK00711.1"/>
    <property type="match status" value="1"/>
</dbReference>
<dbReference type="PANTHER" id="PTHR13847:SF280">
    <property type="entry name" value="D-AMINO ACID DEHYDROGENASE"/>
    <property type="match status" value="1"/>
</dbReference>
<dbReference type="PANTHER" id="PTHR13847">
    <property type="entry name" value="SARCOSINE DEHYDROGENASE-RELATED"/>
    <property type="match status" value="1"/>
</dbReference>
<dbReference type="Pfam" id="PF01266">
    <property type="entry name" value="DAO"/>
    <property type="match status" value="1"/>
</dbReference>
<dbReference type="SUPFAM" id="SSF54373">
    <property type="entry name" value="FAD-linked reductases, C-terminal domain"/>
    <property type="match status" value="1"/>
</dbReference>
<dbReference type="SUPFAM" id="SSF51905">
    <property type="entry name" value="FAD/NAD(P)-binding domain"/>
    <property type="match status" value="1"/>
</dbReference>
<proteinExistence type="inferred from homology"/>
<protein>
    <recommendedName>
        <fullName evidence="1">D-amino acid dehydrogenase</fullName>
        <ecNumber evidence="1">1.4.99.-</ecNumber>
    </recommendedName>
</protein>
<keyword id="KW-0274">FAD</keyword>
<keyword id="KW-0285">Flavoprotein</keyword>
<keyword id="KW-0560">Oxidoreductase</keyword>
<evidence type="ECO:0000255" key="1">
    <source>
        <dbReference type="HAMAP-Rule" id="MF_01202"/>
    </source>
</evidence>
<gene>
    <name evidence="1" type="primary">dadA</name>
    <name type="ordered locus">NGK_2465</name>
</gene>
<accession>B4RR07</accession>
<feature type="chain" id="PRO_1000138659" description="D-amino acid dehydrogenase">
    <location>
        <begin position="1"/>
        <end position="419"/>
    </location>
</feature>
<feature type="binding site" evidence="1">
    <location>
        <begin position="3"/>
        <end position="17"/>
    </location>
    <ligand>
        <name>FAD</name>
        <dbReference type="ChEBI" id="CHEBI:57692"/>
    </ligand>
</feature>